<accession>Q86MA2</accession>
<comment type="function">
    <text evidence="3 4 6">3'-5'exoribonuclease which is involved in the post-transcriptional processing, editing and degradation of mitochondrial RNAs, including mRNAs, rRNAs and guided RNAs (gRNA) (PubMed:15470249, PubMed:26833087). As part of the mitochondrial 3' processome (MPsome), involved in the maturation of guided RNA (gRNA) precursors by catalyzing the processive 3'-5' degradation of uridylated gRNA precursors (PubMed:26833087). Plays a role in the degradation of 12S rRNA processing intermediates and maturation by-products (PubMed:18032430).</text>
</comment>
<comment type="catalytic activity">
    <reaction evidence="6">
        <text>Exonucleolytic cleavage in the 3'- to 5'-direction to yield nucleoside 5'-phosphates.</text>
        <dbReference type="EC" id="3.1.13.1"/>
    </reaction>
</comment>
<comment type="subunit">
    <text evidence="5 6">Component of the mitochondrial 3' processome (MPsome) complex composed at least of terminal uridylyltransferase KRET1/TUT1, 3'-5' exonuclease DSS1, MPSS1, MPSS2 and MPSS3 (PubMed:26833087). Within the complex, interacts with KRET1 and MPSS2 (PubMed:26833087). Component of the mitochondrial degradosome complex composed at least of 3'-5' exonuclease DSS1 and helicase SUV3 (PubMed:19540236). Within the complex, interacts with helicase SUV3 (PubMed:19540236).</text>
</comment>
<comment type="subcellular location">
    <subcellularLocation>
        <location evidence="3 5 6">Mitochondrion</location>
    </subcellularLocation>
</comment>
<comment type="developmental stage">
    <text evidence="3 5 6">Expressed at the procyclic stage (at protein level).</text>
</comment>
<comment type="disruption phenotype">
    <text evidence="3 4 6">RNAi-mediated knockdown at the procyclic stage causes moderate growth defect and reduces the levels of several mitochondrial RNAs, including never edited, unedited, and edited mRNAs as well as guided RNAs (gRNA) (PubMed:15470249, PubMed:26833087). Also results in the accumulation of fragments of the flanking region upstream of the mature 5'end of 12S rRNA, the 5' flanking sequence and the truncated 12S rRNA sequence, and the 5' full-length 12S rRNAs (PubMed:18032430).</text>
</comment>
<comment type="similarity">
    <text evidence="9">Belongs to the RNR ribonuclease family.</text>
</comment>
<name>DSS1_TRYBB</name>
<dbReference type="EC" id="3.1.13.1" evidence="6"/>
<dbReference type="EMBL" id="AY233297">
    <property type="protein sequence ID" value="AAO74636.1"/>
    <property type="molecule type" value="mRNA"/>
</dbReference>
<dbReference type="SMR" id="Q86MA2"/>
<dbReference type="GO" id="GO:0045025">
    <property type="term" value="C:mitochondrial degradosome"/>
    <property type="evidence" value="ECO:0000314"/>
    <property type="project" value="UniProtKB"/>
</dbReference>
<dbReference type="GO" id="GO:0005739">
    <property type="term" value="C:mitochondrion"/>
    <property type="evidence" value="ECO:0000314"/>
    <property type="project" value="UniProtKB"/>
</dbReference>
<dbReference type="GO" id="GO:0000932">
    <property type="term" value="C:P-body"/>
    <property type="evidence" value="ECO:0007669"/>
    <property type="project" value="TreeGrafter"/>
</dbReference>
<dbReference type="GO" id="GO:0032991">
    <property type="term" value="C:protein-containing complex"/>
    <property type="evidence" value="ECO:0000314"/>
    <property type="project" value="UniProtKB"/>
</dbReference>
<dbReference type="GO" id="GO:0000175">
    <property type="term" value="F:3'-5'-RNA exonuclease activity"/>
    <property type="evidence" value="ECO:0000315"/>
    <property type="project" value="UniProtKB"/>
</dbReference>
<dbReference type="GO" id="GO:0008859">
    <property type="term" value="F:exoribonuclease II activity"/>
    <property type="evidence" value="ECO:0007669"/>
    <property type="project" value="UniProtKB-EC"/>
</dbReference>
<dbReference type="GO" id="GO:0003723">
    <property type="term" value="F:RNA binding"/>
    <property type="evidence" value="ECO:0007669"/>
    <property type="project" value="InterPro"/>
</dbReference>
<dbReference type="GO" id="GO:0004532">
    <property type="term" value="F:RNA exonuclease activity"/>
    <property type="evidence" value="ECO:0000315"/>
    <property type="project" value="GeneDB"/>
</dbReference>
<dbReference type="GO" id="GO:0080156">
    <property type="term" value="P:mitochondrial mRNA modification"/>
    <property type="evidence" value="ECO:0000315"/>
    <property type="project" value="UniProtKB"/>
</dbReference>
<dbReference type="GO" id="GO:0000965">
    <property type="term" value="P:mitochondrial RNA 3'-end processing"/>
    <property type="evidence" value="ECO:0000315"/>
    <property type="project" value="GeneDB"/>
</dbReference>
<dbReference type="GO" id="GO:0000964">
    <property type="term" value="P:mitochondrial RNA 5'-end processing"/>
    <property type="evidence" value="ECO:0000315"/>
    <property type="project" value="GeneDB"/>
</dbReference>
<dbReference type="GO" id="GO:0000963">
    <property type="term" value="P:mitochondrial RNA processing"/>
    <property type="evidence" value="ECO:0000314"/>
    <property type="project" value="UniProtKB"/>
</dbReference>
<dbReference type="GO" id="GO:0006402">
    <property type="term" value="P:mRNA catabolic process"/>
    <property type="evidence" value="ECO:0007669"/>
    <property type="project" value="TreeGrafter"/>
</dbReference>
<dbReference type="InterPro" id="IPR012340">
    <property type="entry name" value="NA-bd_OB-fold"/>
</dbReference>
<dbReference type="InterPro" id="IPR001900">
    <property type="entry name" value="RNase_II/R"/>
</dbReference>
<dbReference type="InterPro" id="IPR050180">
    <property type="entry name" value="RNR_Ribonuclease"/>
</dbReference>
<dbReference type="PANTHER" id="PTHR23355:SF60">
    <property type="entry name" value="MITOCHONDRIAL EXORIBONUCLEASE DSS-1"/>
    <property type="match status" value="1"/>
</dbReference>
<dbReference type="PANTHER" id="PTHR23355">
    <property type="entry name" value="RIBONUCLEASE"/>
    <property type="match status" value="1"/>
</dbReference>
<dbReference type="Pfam" id="PF00773">
    <property type="entry name" value="RNB"/>
    <property type="match status" value="1"/>
</dbReference>
<dbReference type="SMART" id="SM00955">
    <property type="entry name" value="RNB"/>
    <property type="match status" value="1"/>
</dbReference>
<dbReference type="SUPFAM" id="SSF50249">
    <property type="entry name" value="Nucleic acid-binding proteins"/>
    <property type="match status" value="1"/>
</dbReference>
<evidence type="ECO:0000255" key="1"/>
<evidence type="ECO:0000256" key="2">
    <source>
        <dbReference type="SAM" id="MobiDB-lite"/>
    </source>
</evidence>
<evidence type="ECO:0000269" key="3">
    <source>
    </source>
</evidence>
<evidence type="ECO:0000269" key="4">
    <source>
    </source>
</evidence>
<evidence type="ECO:0000269" key="5">
    <source>
    </source>
</evidence>
<evidence type="ECO:0000269" key="6">
    <source>
    </source>
</evidence>
<evidence type="ECO:0000303" key="7">
    <source>
    </source>
</evidence>
<evidence type="ECO:0000303" key="8">
    <source>
    </source>
</evidence>
<evidence type="ECO:0000305" key="9"/>
<evidence type="ECO:0000312" key="10">
    <source>
        <dbReference type="EMBL" id="AAO74636.1"/>
    </source>
</evidence>
<sequence length="743" mass="83357">MTPRRVAKLVQFSGSYLNTEWARKFILGSLLQRYNPQSLTTVGSSAAGNSGEDASLDKELLHLQRSLSEVWSLPAQPLDAVSEGRILRLLARYATGEGVMSIEALNELSHVLSCIRGSPQRVEGPIDMEELLLAIGYAKPGDNLRRVAFAGELQYPPSALAHMRAHLRDDMERDGSDPFDILRVVTHNPAYAIDSASTSEVDDAIGVHKDPVTGEECFVVYVSDATVYCPFDSPLEQLTARLLTTTTYLPEGVFFMLPKPIVDAATLREDRPCRTFDIRFQIDEVTGELKNYSVGVGWLHKLRRITYDEVQALYDEEAQVGNQHHHTERESTQASPAKREEGKKGMVASGGTSSCRPSWMTVEDESILRRIYRAAQKRYETRQLRAGDRFIHADLPEPLIKVGAGAQVLSVEDQIIGTRDARLAVAEMMIAANEVCSRVAQENHLSIPFRGTRELSLDHVAAKSYREPHGVVSVQSLDPQYVFFAEAMQRSIRQLSGVTRAVYFHTPIYHAGLDTHNYTHSTSPLRRYADMLVHHQLKVWLWRTSHCSSGGGVLHSAQKSSPVLIEQPIAEHTMATLCSMISSKQEQSSILQESSQRYWLLKHIKQNILTKSPHHRFICLVGDTRSVKCAPEYARFVVECSHDSPSQPDGGVHRTVPWAGRWKQRHHEYLYVSDIYITELQFAHVVLHSLPDVVVGAVVECEVREVHPTQGYLSLAIVKVWSGGDERRFEPLWKKCLLPSLDS</sequence>
<gene>
    <name evidence="7" type="primary">DSS1</name>
</gene>
<proteinExistence type="evidence at protein level"/>
<protein>
    <recommendedName>
        <fullName evidence="7">Mitochondrial exoribonuclease DSS-1</fullName>
        <shortName evidence="7">TbDSS-1</shortName>
        <ecNumber evidence="6">3.1.13.1</ecNumber>
    </recommendedName>
    <alternativeName>
        <fullName evidence="8">3'-5' exonuclease DSS1</fullName>
    </alternativeName>
</protein>
<keyword id="KW-0269">Exonuclease</keyword>
<keyword id="KW-0378">Hydrolase</keyword>
<keyword id="KW-0496">Mitochondrion</keyword>
<keyword id="KW-0540">Nuclease</keyword>
<keyword id="KW-0809">Transit peptide</keyword>
<feature type="transit peptide" description="Mitochondrion" evidence="1">
    <location>
        <begin position="1"/>
        <end position="67"/>
    </location>
</feature>
<feature type="chain" id="PRO_0000450685" description="Mitochondrial exoribonuclease DSS-1" evidence="1">
    <location>
        <begin position="68"/>
        <end position="743"/>
    </location>
</feature>
<feature type="domain" description="RNB" evidence="1">
    <location>
        <begin position="186"/>
        <end position="542"/>
    </location>
</feature>
<feature type="region of interest" description="Disordered" evidence="2">
    <location>
        <begin position="320"/>
        <end position="357"/>
    </location>
</feature>
<feature type="compositionally biased region" description="Basic and acidic residues" evidence="2">
    <location>
        <begin position="325"/>
        <end position="344"/>
    </location>
</feature>
<feature type="mutagenesis site" description="Loss of catalytic activity." evidence="6">
    <original>D</original>
    <variation>A</variation>
    <location>
        <position position="202"/>
    </location>
</feature>
<reference evidence="10" key="1">
    <citation type="journal article" date="2004" name="Eukaryot. Cell">
        <title>TbDSS-1, an essential Trypanosoma brucei exoribonuclease homolog that has pleiotropic effects on mitochondrial RNA metabolism.</title>
        <authorList>
            <person name="Penschow J.L."/>
            <person name="Sleve D.A."/>
            <person name="Ryan C.M."/>
            <person name="Read L.K."/>
        </authorList>
    </citation>
    <scope>NUCLEOTIDE SEQUENCE [MRNA]</scope>
    <scope>FUNCTION</scope>
    <scope>SUBCELLULAR LOCATION</scope>
    <scope>DEVELOPMENTAL STAGE</scope>
    <scope>DISRUPTION PHENOTYPE</scope>
</reference>
<reference evidence="9" key="2">
    <citation type="journal article" date="2008" name="Nucleic Acids Res.">
        <title>Roles for TbDSS-1 in RNA surveillance and decay of maturation by-products from the 12S rRNA locus.</title>
        <authorList>
            <person name="Mattiacio J.L."/>
            <person name="Read L.K."/>
        </authorList>
    </citation>
    <scope>FUNCTION</scope>
    <scope>DISRUPTION PHENOTYPE</scope>
</reference>
<reference evidence="9" key="3">
    <citation type="journal article" date="2009" name="FEBS Lett.">
        <title>Evidence for a degradosome-like complex in the mitochondria of Trypanosoma brucei.</title>
        <authorList>
            <person name="Mattiacio J.L."/>
            <person name="Read L.K."/>
        </authorList>
    </citation>
    <scope>IDENTIFICATION IN THE MITOCHONDRIAL DEGRADOSOME COMPLEX</scope>
    <scope>INTERACTION WITH SUV3</scope>
    <scope>SUBCELLULAR LOCATION</scope>
    <scope>DEVELOPMENTAL STAGE</scope>
</reference>
<reference evidence="9" key="4">
    <citation type="journal article" date="2016" name="Mol. Cell">
        <title>Antisense Transcripts Delimit Exonucleolytic Activity of the Mitochondrial 3' Processome to Generate Guide RNAs.</title>
        <authorList>
            <person name="Suematsu T."/>
            <person name="Zhang L."/>
            <person name="Aphasizheva I."/>
            <person name="Monti S."/>
            <person name="Huang L."/>
            <person name="Wang Q."/>
            <person name="Costello C.E."/>
            <person name="Aphasizhev R."/>
        </authorList>
    </citation>
    <scope>FUNCTION</scope>
    <scope>CATALYTIC ACTIVITY</scope>
    <scope>IDENTIFICATION IN THE MPSOME COMPLEX</scope>
    <scope>INTERACTION WITH KRET1 AND MPSS2</scope>
    <scope>SUBCELLULAR LOCATION</scope>
    <scope>DEVELOPMENTAL STAGE</scope>
    <scope>IDENTIFICATION BY MASS SPECTROMETRY</scope>
    <scope>DISRUPTION PHENOTYPE</scope>
    <scope>MUTAGENESIS OF ASP-202</scope>
</reference>
<organism>
    <name type="scientific">Trypanosoma brucei brucei</name>
    <dbReference type="NCBI Taxonomy" id="5702"/>
    <lineage>
        <taxon>Eukaryota</taxon>
        <taxon>Discoba</taxon>
        <taxon>Euglenozoa</taxon>
        <taxon>Kinetoplastea</taxon>
        <taxon>Metakinetoplastina</taxon>
        <taxon>Trypanosomatida</taxon>
        <taxon>Trypanosomatidae</taxon>
        <taxon>Trypanosoma</taxon>
    </lineage>
</organism>